<sequence length="88" mass="9806">MRIYSLLILSFLLLASAVLINSAEMPRSEKSLLYSIMQGREDSEEGRCLGPMDECNVFDDNCCAGWLKCNCDWGFAGNCRCSKTPKEG</sequence>
<name>TI1A_HADIN</name>
<keyword id="KW-1015">Disulfide bond</keyword>
<keyword id="KW-0872">Ion channel impairing toxin</keyword>
<keyword id="KW-0964">Secreted</keyword>
<keyword id="KW-0732">Signal</keyword>
<keyword id="KW-0800">Toxin</keyword>
<protein>
    <recommendedName>
        <fullName evidence="4">U18-hexatoxin-Hi1a</fullName>
        <shortName evidence="6">U18-HXTX-Hi1a</shortName>
    </recommendedName>
    <alternativeName>
        <fullName evidence="4">SF23 peptide</fullName>
    </alternativeName>
</protein>
<organism>
    <name type="scientific">Hadronyche infensa</name>
    <name type="common">Fraser island funnel-web spider</name>
    <name type="synonym">Atrax infensus</name>
    <dbReference type="NCBI Taxonomy" id="153481"/>
    <lineage>
        <taxon>Eukaryota</taxon>
        <taxon>Metazoa</taxon>
        <taxon>Ecdysozoa</taxon>
        <taxon>Arthropoda</taxon>
        <taxon>Chelicerata</taxon>
        <taxon>Arachnida</taxon>
        <taxon>Araneae</taxon>
        <taxon>Mygalomorphae</taxon>
        <taxon>Hexathelidae</taxon>
        <taxon>Hadronyche</taxon>
    </lineage>
</organism>
<accession>A0A1D0BRB0</accession>
<reference key="1">
    <citation type="journal article" date="2020" name="Proc. Natl. Acad. Sci. U.S.A.">
        <title>Structural venomics reveals evolution of a complex venom by duplication and diversification of an ancient peptide-encoding gene.</title>
        <authorList>
            <person name="Pineda S.S."/>
            <person name="Chin Y.K."/>
            <person name="Undheim E.A.B."/>
            <person name="Senff S."/>
            <person name="Mobli M."/>
            <person name="Dauly C."/>
            <person name="Escoubas P."/>
            <person name="Nicholson G.M."/>
            <person name="Kaas Q."/>
            <person name="Guo S."/>
            <person name="Herzig V."/>
            <person name="Mattick J.S."/>
            <person name="King G.F."/>
        </authorList>
    </citation>
    <scope>NUCLEOTIDE SEQUENCE [MRNA]</scope>
    <scope>FUNCTION</scope>
    <scope>BIOASSAY</scope>
    <scope>RECOMBINANT EXPRESSION</scope>
    <scope>IDENTIFICATION BY MASS SPECTROMETRY</scope>
    <scope>SUBCELLULAR LOCATION</scope>
    <source>
        <tissue>Venom</tissue>
        <tissue>Venom gland</tissue>
    </source>
</reference>
<reference evidence="7" key="2">
    <citation type="thesis" date="2012" institute="The University of Queensland" country="Australia">
        <title>Probing the chemical diversity of venom from the Australian Funnel-web spider Hadronyche infensa.</title>
        <authorList>
            <person name="Pineda S.S."/>
        </authorList>
    </citation>
    <scope>NUCLEOTIDE SEQUENCE [MRNA]</scope>
    <source>
        <tissue>Venom gland</tissue>
    </source>
</reference>
<reference evidence="7" key="3">
    <citation type="submission" date="2014-07" db="EMBL/GenBank/DDBJ databases">
        <authorList>
            <person name="Zhang J.E."/>
            <person name="Yang H."/>
            <person name="Guo J."/>
            <person name="Deng Z."/>
            <person name="Luo H."/>
            <person name="Luo M."/>
            <person name="Zhao B."/>
        </authorList>
    </citation>
    <scope>NUCLEOTIDE SEQUENCE [MRNA]</scope>
    <source>
        <tissue>Venom gland</tissue>
    </source>
</reference>
<feature type="signal peptide" evidence="2">
    <location>
        <begin position="1"/>
        <end position="17"/>
    </location>
</feature>
<feature type="propeptide" id="PRO_0000459679" evidence="6">
    <location>
        <begin position="18"/>
        <end position="47"/>
    </location>
</feature>
<feature type="chain" id="PRO_5008897017" description="U18-hexatoxin-Hi1a" evidence="6">
    <location>
        <begin position="48"/>
        <end position="88"/>
    </location>
</feature>
<feature type="disulfide bond" evidence="1">
    <location>
        <begin position="48"/>
        <end position="63"/>
    </location>
</feature>
<feature type="disulfide bond" evidence="1">
    <location>
        <begin position="55"/>
        <end position="69"/>
    </location>
</feature>
<feature type="disulfide bond" evidence="1">
    <location>
        <begin position="62"/>
        <end position="81"/>
    </location>
</feature>
<feature type="disulfide bond" evidence="1">
    <location>
        <begin position="71"/>
        <end position="79"/>
    </location>
</feature>
<feature type="sequence conflict" description="In Ref. 1." evidence="5" ref="1">
    <original>Y</original>
    <variation>H</variation>
    <location>
        <position position="4"/>
    </location>
</feature>
<feature type="sequence conflict" description="In Ref. 1." evidence="5" ref="1">
    <original>A</original>
    <variation>T</variation>
    <location>
        <position position="17"/>
    </location>
</feature>
<evidence type="ECO:0000250" key="1">
    <source>
        <dbReference type="UniProtKB" id="P83257"/>
    </source>
</evidence>
<evidence type="ECO:0000255" key="2"/>
<evidence type="ECO:0000269" key="3">
    <source>
    </source>
</evidence>
<evidence type="ECO:0000303" key="4">
    <source>
    </source>
</evidence>
<evidence type="ECO:0000305" key="5"/>
<evidence type="ECO:0000305" key="6">
    <source>
    </source>
</evidence>
<evidence type="ECO:0000312" key="7">
    <source>
        <dbReference type="EMBL" id="CDZ18872.1"/>
    </source>
</evidence>
<proteinExistence type="evidence at protein level"/>
<dbReference type="EMBL" id="HACE01000088">
    <property type="protein sequence ID" value="CDZ18872.1"/>
    <property type="molecule type" value="mRNA"/>
</dbReference>
<dbReference type="SMR" id="A0A1D0BRB0"/>
<dbReference type="GO" id="GO:0005576">
    <property type="term" value="C:extracellular region"/>
    <property type="evidence" value="ECO:0007669"/>
    <property type="project" value="UniProtKB-SubCell"/>
</dbReference>
<dbReference type="GO" id="GO:0099106">
    <property type="term" value="F:ion channel regulator activity"/>
    <property type="evidence" value="ECO:0007669"/>
    <property type="project" value="UniProtKB-KW"/>
</dbReference>
<dbReference type="GO" id="GO:0090729">
    <property type="term" value="F:toxin activity"/>
    <property type="evidence" value="ECO:0007669"/>
    <property type="project" value="UniProtKB-KW"/>
</dbReference>
<comment type="function">
    <text evidence="3">Weak insecticidal toxin with probable ion channel impairing activity. In vivo, induces paralysis when injected into sheep blowflies (L.cuprina). Shows weak toxicity, since it is only toxic at high doses, and flies recover within 24 hours.</text>
</comment>
<comment type="subcellular location">
    <subcellularLocation>
        <location evidence="3">Secreted</location>
    </subcellularLocation>
</comment>
<comment type="tissue specificity">
    <text evidence="6">Expressed by the venom gland.</text>
</comment>
<comment type="domain">
    <text evidence="6">The presence of a 'disulfide through disulfide knot' structurally defines this protein as a knottin.</text>
</comment>
<comment type="similarity">
    <text evidence="5">Belongs to the neurotoxin 07 (Beta/delta-agtx) family. 02 (aga-3) subfamily.</text>
</comment>